<organism>
    <name type="scientific">Yersinia pestis bv. Antiqua (strain Antiqua)</name>
    <dbReference type="NCBI Taxonomy" id="360102"/>
    <lineage>
        <taxon>Bacteria</taxon>
        <taxon>Pseudomonadati</taxon>
        <taxon>Pseudomonadota</taxon>
        <taxon>Gammaproteobacteria</taxon>
        <taxon>Enterobacterales</taxon>
        <taxon>Yersiniaceae</taxon>
        <taxon>Yersinia</taxon>
    </lineage>
</organism>
<name>ERA_YERPA</name>
<evidence type="ECO:0000255" key="1">
    <source>
        <dbReference type="HAMAP-Rule" id="MF_00367"/>
    </source>
</evidence>
<evidence type="ECO:0000255" key="2">
    <source>
        <dbReference type="PROSITE-ProRule" id="PRU01050"/>
    </source>
</evidence>
<keyword id="KW-0997">Cell inner membrane</keyword>
<keyword id="KW-1003">Cell membrane</keyword>
<keyword id="KW-0963">Cytoplasm</keyword>
<keyword id="KW-0342">GTP-binding</keyword>
<keyword id="KW-0472">Membrane</keyword>
<keyword id="KW-0547">Nucleotide-binding</keyword>
<keyword id="KW-0690">Ribosome biogenesis</keyword>
<keyword id="KW-0694">RNA-binding</keyword>
<keyword id="KW-0699">rRNA-binding</keyword>
<comment type="function">
    <text evidence="1">An essential GTPase that binds both GDP and GTP, with rapid nucleotide exchange. Plays a role in 16S rRNA processing and 30S ribosomal subunit biogenesis and possibly also in cell cycle regulation and energy metabolism.</text>
</comment>
<comment type="subunit">
    <text evidence="1">Monomer.</text>
</comment>
<comment type="subcellular location">
    <subcellularLocation>
        <location>Cytoplasm</location>
    </subcellularLocation>
    <subcellularLocation>
        <location evidence="1">Cell inner membrane</location>
        <topology evidence="1">Peripheral membrane protein</topology>
    </subcellularLocation>
</comment>
<comment type="similarity">
    <text evidence="1 2">Belongs to the TRAFAC class TrmE-Era-EngA-EngB-Septin-like GTPase superfamily. Era GTPase family.</text>
</comment>
<gene>
    <name evidence="1" type="primary">era</name>
    <name type="ordered locus">YPA_2453</name>
</gene>
<accession>Q1C554</accession>
<sequence>MSEVEKTYCGFIAIVGRPNVGKSTLLNELLGQKISITSRKPQTTRHRIMGIHTEGPYQAIYVDTPGLHIEEKRAINRLMNRAASSSLGDVELVIFVVEGTHWTADDEMVVNKLRSLQCPVLLAINKVDNVTDKTKLLPHMQFLSQQMNFLDVVPISAEKGMNVDTIASIVRKHMPEAEHHFPEDYITDRSQRFMASEIIREKLMRFLGEELPYSVTVEIEQFVPNERGGYNIHGLILVEREGQKKMVIGNKGSKIKVIGTEARQDMERMFEAKVHLELWVKVKSGWADDERALRSLGYTDDLK</sequence>
<dbReference type="EMBL" id="CP000308">
    <property type="protein sequence ID" value="ABG14418.1"/>
    <property type="molecule type" value="Genomic_DNA"/>
</dbReference>
<dbReference type="RefSeq" id="WP_002214829.1">
    <property type="nucleotide sequence ID" value="NZ_CP009906.1"/>
</dbReference>
<dbReference type="SMR" id="Q1C554"/>
<dbReference type="GeneID" id="96662248"/>
<dbReference type="KEGG" id="ypa:YPA_2453"/>
<dbReference type="Proteomes" id="UP000001971">
    <property type="component" value="Chromosome"/>
</dbReference>
<dbReference type="GO" id="GO:0005829">
    <property type="term" value="C:cytosol"/>
    <property type="evidence" value="ECO:0007669"/>
    <property type="project" value="TreeGrafter"/>
</dbReference>
<dbReference type="GO" id="GO:0005886">
    <property type="term" value="C:plasma membrane"/>
    <property type="evidence" value="ECO:0007669"/>
    <property type="project" value="UniProtKB-SubCell"/>
</dbReference>
<dbReference type="GO" id="GO:0005525">
    <property type="term" value="F:GTP binding"/>
    <property type="evidence" value="ECO:0007669"/>
    <property type="project" value="UniProtKB-UniRule"/>
</dbReference>
<dbReference type="GO" id="GO:0003924">
    <property type="term" value="F:GTPase activity"/>
    <property type="evidence" value="ECO:0007669"/>
    <property type="project" value="UniProtKB-UniRule"/>
</dbReference>
<dbReference type="GO" id="GO:0043024">
    <property type="term" value="F:ribosomal small subunit binding"/>
    <property type="evidence" value="ECO:0007669"/>
    <property type="project" value="TreeGrafter"/>
</dbReference>
<dbReference type="GO" id="GO:0070181">
    <property type="term" value="F:small ribosomal subunit rRNA binding"/>
    <property type="evidence" value="ECO:0007669"/>
    <property type="project" value="UniProtKB-UniRule"/>
</dbReference>
<dbReference type="GO" id="GO:0000028">
    <property type="term" value="P:ribosomal small subunit assembly"/>
    <property type="evidence" value="ECO:0007669"/>
    <property type="project" value="TreeGrafter"/>
</dbReference>
<dbReference type="CDD" id="cd04163">
    <property type="entry name" value="Era"/>
    <property type="match status" value="1"/>
</dbReference>
<dbReference type="CDD" id="cd22534">
    <property type="entry name" value="KH-II_Era"/>
    <property type="match status" value="1"/>
</dbReference>
<dbReference type="FunFam" id="3.30.300.20:FF:000003">
    <property type="entry name" value="GTPase Era"/>
    <property type="match status" value="1"/>
</dbReference>
<dbReference type="FunFam" id="3.40.50.300:FF:000094">
    <property type="entry name" value="GTPase Era"/>
    <property type="match status" value="1"/>
</dbReference>
<dbReference type="Gene3D" id="3.30.300.20">
    <property type="match status" value="1"/>
</dbReference>
<dbReference type="Gene3D" id="3.40.50.300">
    <property type="entry name" value="P-loop containing nucleotide triphosphate hydrolases"/>
    <property type="match status" value="1"/>
</dbReference>
<dbReference type="HAMAP" id="MF_00367">
    <property type="entry name" value="GTPase_Era"/>
    <property type="match status" value="1"/>
</dbReference>
<dbReference type="InterPro" id="IPR030388">
    <property type="entry name" value="G_ERA_dom"/>
</dbReference>
<dbReference type="InterPro" id="IPR006073">
    <property type="entry name" value="GTP-bd"/>
</dbReference>
<dbReference type="InterPro" id="IPR005662">
    <property type="entry name" value="GTPase_Era-like"/>
</dbReference>
<dbReference type="InterPro" id="IPR015946">
    <property type="entry name" value="KH_dom-like_a/b"/>
</dbReference>
<dbReference type="InterPro" id="IPR004044">
    <property type="entry name" value="KH_dom_type_2"/>
</dbReference>
<dbReference type="InterPro" id="IPR009019">
    <property type="entry name" value="KH_sf_prok-type"/>
</dbReference>
<dbReference type="InterPro" id="IPR027417">
    <property type="entry name" value="P-loop_NTPase"/>
</dbReference>
<dbReference type="InterPro" id="IPR005225">
    <property type="entry name" value="Small_GTP-bd"/>
</dbReference>
<dbReference type="NCBIfam" id="TIGR00436">
    <property type="entry name" value="era"/>
    <property type="match status" value="1"/>
</dbReference>
<dbReference type="NCBIfam" id="NF000908">
    <property type="entry name" value="PRK00089.1"/>
    <property type="match status" value="1"/>
</dbReference>
<dbReference type="NCBIfam" id="TIGR00231">
    <property type="entry name" value="small_GTP"/>
    <property type="match status" value="1"/>
</dbReference>
<dbReference type="PANTHER" id="PTHR42698">
    <property type="entry name" value="GTPASE ERA"/>
    <property type="match status" value="1"/>
</dbReference>
<dbReference type="PANTHER" id="PTHR42698:SF1">
    <property type="entry name" value="GTPASE ERA, MITOCHONDRIAL"/>
    <property type="match status" value="1"/>
</dbReference>
<dbReference type="Pfam" id="PF07650">
    <property type="entry name" value="KH_2"/>
    <property type="match status" value="1"/>
</dbReference>
<dbReference type="Pfam" id="PF01926">
    <property type="entry name" value="MMR_HSR1"/>
    <property type="match status" value="1"/>
</dbReference>
<dbReference type="SUPFAM" id="SSF52540">
    <property type="entry name" value="P-loop containing nucleoside triphosphate hydrolases"/>
    <property type="match status" value="1"/>
</dbReference>
<dbReference type="SUPFAM" id="SSF54814">
    <property type="entry name" value="Prokaryotic type KH domain (KH-domain type II)"/>
    <property type="match status" value="1"/>
</dbReference>
<dbReference type="PROSITE" id="PS51713">
    <property type="entry name" value="G_ERA"/>
    <property type="match status" value="1"/>
</dbReference>
<dbReference type="PROSITE" id="PS50823">
    <property type="entry name" value="KH_TYPE_2"/>
    <property type="match status" value="1"/>
</dbReference>
<protein>
    <recommendedName>
        <fullName evidence="1">GTPase Era</fullName>
    </recommendedName>
</protein>
<feature type="chain" id="PRO_1000079774" description="GTPase Era">
    <location>
        <begin position="1"/>
        <end position="303"/>
    </location>
</feature>
<feature type="domain" description="Era-type G" evidence="2">
    <location>
        <begin position="8"/>
        <end position="176"/>
    </location>
</feature>
<feature type="domain" description="KH type-2" evidence="1">
    <location>
        <begin position="207"/>
        <end position="284"/>
    </location>
</feature>
<feature type="region of interest" description="G1" evidence="2">
    <location>
        <begin position="16"/>
        <end position="23"/>
    </location>
</feature>
<feature type="region of interest" description="G2" evidence="2">
    <location>
        <begin position="42"/>
        <end position="46"/>
    </location>
</feature>
<feature type="region of interest" description="G3" evidence="2">
    <location>
        <begin position="63"/>
        <end position="66"/>
    </location>
</feature>
<feature type="region of interest" description="G4" evidence="2">
    <location>
        <begin position="125"/>
        <end position="128"/>
    </location>
</feature>
<feature type="region of interest" description="G5" evidence="2">
    <location>
        <begin position="155"/>
        <end position="157"/>
    </location>
</feature>
<feature type="binding site" evidence="1">
    <location>
        <begin position="16"/>
        <end position="23"/>
    </location>
    <ligand>
        <name>GTP</name>
        <dbReference type="ChEBI" id="CHEBI:37565"/>
    </ligand>
</feature>
<feature type="binding site" evidence="1">
    <location>
        <begin position="63"/>
        <end position="67"/>
    </location>
    <ligand>
        <name>GTP</name>
        <dbReference type="ChEBI" id="CHEBI:37565"/>
    </ligand>
</feature>
<feature type="binding site" evidence="1">
    <location>
        <begin position="125"/>
        <end position="128"/>
    </location>
    <ligand>
        <name>GTP</name>
        <dbReference type="ChEBI" id="CHEBI:37565"/>
    </ligand>
</feature>
<reference key="1">
    <citation type="journal article" date="2006" name="J. Bacteriol.">
        <title>Complete genome sequence of Yersinia pestis strains Antiqua and Nepal516: evidence of gene reduction in an emerging pathogen.</title>
        <authorList>
            <person name="Chain P.S.G."/>
            <person name="Hu P."/>
            <person name="Malfatti S.A."/>
            <person name="Radnedge L."/>
            <person name="Larimer F."/>
            <person name="Vergez L.M."/>
            <person name="Worsham P."/>
            <person name="Chu M.C."/>
            <person name="Andersen G.L."/>
        </authorList>
    </citation>
    <scope>NUCLEOTIDE SEQUENCE [LARGE SCALE GENOMIC DNA]</scope>
    <source>
        <strain>Antiqua</strain>
    </source>
</reference>
<proteinExistence type="inferred from homology"/>